<feature type="chain" id="PRO_1000116470" description="UDP-N-acetylglucosamine--N-acetylmuramyl-(pentapeptide) pyrophosphoryl-undecaprenol N-acetylglucosamine transferase">
    <location>
        <begin position="1"/>
        <end position="363"/>
    </location>
</feature>
<feature type="binding site" evidence="1">
    <location>
        <begin position="13"/>
        <end position="15"/>
    </location>
    <ligand>
        <name>UDP-N-acetyl-alpha-D-glucosamine</name>
        <dbReference type="ChEBI" id="CHEBI:57705"/>
    </ligand>
</feature>
<feature type="binding site" evidence="1">
    <location>
        <position position="125"/>
    </location>
    <ligand>
        <name>UDP-N-acetyl-alpha-D-glucosamine</name>
        <dbReference type="ChEBI" id="CHEBI:57705"/>
    </ligand>
</feature>
<feature type="binding site" evidence="1">
    <location>
        <position position="166"/>
    </location>
    <ligand>
        <name>UDP-N-acetyl-alpha-D-glucosamine</name>
        <dbReference type="ChEBI" id="CHEBI:57705"/>
    </ligand>
</feature>
<feature type="binding site" evidence="1">
    <location>
        <position position="195"/>
    </location>
    <ligand>
        <name>UDP-N-acetyl-alpha-D-glucosamine</name>
        <dbReference type="ChEBI" id="CHEBI:57705"/>
    </ligand>
</feature>
<feature type="binding site" evidence="1">
    <location>
        <position position="249"/>
    </location>
    <ligand>
        <name>UDP-N-acetyl-alpha-D-glucosamine</name>
        <dbReference type="ChEBI" id="CHEBI:57705"/>
    </ligand>
</feature>
<feature type="binding site" evidence="1">
    <location>
        <begin position="268"/>
        <end position="273"/>
    </location>
    <ligand>
        <name>UDP-N-acetyl-alpha-D-glucosamine</name>
        <dbReference type="ChEBI" id="CHEBI:57705"/>
    </ligand>
</feature>
<feature type="binding site" evidence="1">
    <location>
        <position position="294"/>
    </location>
    <ligand>
        <name>UDP-N-acetyl-alpha-D-glucosamine</name>
        <dbReference type="ChEBI" id="CHEBI:57705"/>
    </ligand>
</feature>
<gene>
    <name evidence="1" type="primary">murG</name>
    <name type="ordered locus">CJA_2929</name>
</gene>
<organism>
    <name type="scientific">Cellvibrio japonicus (strain Ueda107)</name>
    <name type="common">Pseudomonas fluorescens subsp. cellulosa</name>
    <dbReference type="NCBI Taxonomy" id="498211"/>
    <lineage>
        <taxon>Bacteria</taxon>
        <taxon>Pseudomonadati</taxon>
        <taxon>Pseudomonadota</taxon>
        <taxon>Gammaproteobacteria</taxon>
        <taxon>Cellvibrionales</taxon>
        <taxon>Cellvibrionaceae</taxon>
        <taxon>Cellvibrio</taxon>
    </lineage>
</organism>
<name>MURG_CELJU</name>
<accession>B3PCM0</accession>
<protein>
    <recommendedName>
        <fullName evidence="1">UDP-N-acetylglucosamine--N-acetylmuramyl-(pentapeptide) pyrophosphoryl-undecaprenol N-acetylglucosamine transferase</fullName>
        <ecNumber evidence="1">2.4.1.227</ecNumber>
    </recommendedName>
    <alternativeName>
        <fullName evidence="1">Undecaprenyl-PP-MurNAc-pentapeptide-UDPGlcNAc GlcNAc transferase</fullName>
    </alternativeName>
</protein>
<proteinExistence type="inferred from homology"/>
<evidence type="ECO:0000255" key="1">
    <source>
        <dbReference type="HAMAP-Rule" id="MF_00033"/>
    </source>
</evidence>
<sequence length="363" mass="37939">MKTLSILVMAGGTGGHVFPALAVAEELRARGALVEWLGTAKGIENTLVPKANIPLNLISVEGVRGRGLTGLLKAPFLITKAVFQAISIIRKMNADLVLGFGGFASGPGGVAARLLGKPLVIHEQNAVAGTTNRLLARIAQRVLAAFDGAFHNTSTRVVKVVGNPVRPSIYQLPPVAERYQARAQEHPHLLVLGGSLGAKAINELLPMALAQLNEGQRPEVWHQTGKAHGESTAALYLQQQVNARVEPFIEDMAAAYAWADLVICRAGALTVSELMAAGVASALIPLPTAIDDHQTRNAHILASANAGVALVQQTLTAADLAALLSTTLADRPALMAMAQRAQHLAHPNAAATVANVCVEVAHG</sequence>
<dbReference type="EC" id="2.4.1.227" evidence="1"/>
<dbReference type="EMBL" id="CP000934">
    <property type="protein sequence ID" value="ACE84592.1"/>
    <property type="molecule type" value="Genomic_DNA"/>
</dbReference>
<dbReference type="RefSeq" id="WP_012488513.1">
    <property type="nucleotide sequence ID" value="NC_010995.1"/>
</dbReference>
<dbReference type="SMR" id="B3PCM0"/>
<dbReference type="STRING" id="498211.CJA_2929"/>
<dbReference type="CAZy" id="GT28">
    <property type="family name" value="Glycosyltransferase Family 28"/>
</dbReference>
<dbReference type="KEGG" id="cja:CJA_2929"/>
<dbReference type="eggNOG" id="COG0707">
    <property type="taxonomic scope" value="Bacteria"/>
</dbReference>
<dbReference type="HOGENOM" id="CLU_037404_2_0_6"/>
<dbReference type="OrthoDB" id="9808936at2"/>
<dbReference type="UniPathway" id="UPA00219"/>
<dbReference type="Proteomes" id="UP000001036">
    <property type="component" value="Chromosome"/>
</dbReference>
<dbReference type="GO" id="GO:0005886">
    <property type="term" value="C:plasma membrane"/>
    <property type="evidence" value="ECO:0007669"/>
    <property type="project" value="UniProtKB-SubCell"/>
</dbReference>
<dbReference type="GO" id="GO:0051991">
    <property type="term" value="F:UDP-N-acetyl-D-glucosamine:N-acetylmuramoyl-L-alanyl-D-glutamyl-meso-2,6-diaminopimelyl-D-alanyl-D-alanine-diphosphoundecaprenol 4-beta-N-acetylglucosaminlytransferase activity"/>
    <property type="evidence" value="ECO:0007669"/>
    <property type="project" value="RHEA"/>
</dbReference>
<dbReference type="GO" id="GO:0050511">
    <property type="term" value="F:undecaprenyldiphospho-muramoylpentapeptide beta-N-acetylglucosaminyltransferase activity"/>
    <property type="evidence" value="ECO:0007669"/>
    <property type="project" value="UniProtKB-UniRule"/>
</dbReference>
<dbReference type="GO" id="GO:0005975">
    <property type="term" value="P:carbohydrate metabolic process"/>
    <property type="evidence" value="ECO:0007669"/>
    <property type="project" value="InterPro"/>
</dbReference>
<dbReference type="GO" id="GO:0051301">
    <property type="term" value="P:cell division"/>
    <property type="evidence" value="ECO:0007669"/>
    <property type="project" value="UniProtKB-KW"/>
</dbReference>
<dbReference type="GO" id="GO:0071555">
    <property type="term" value="P:cell wall organization"/>
    <property type="evidence" value="ECO:0007669"/>
    <property type="project" value="UniProtKB-KW"/>
</dbReference>
<dbReference type="GO" id="GO:0030259">
    <property type="term" value="P:lipid glycosylation"/>
    <property type="evidence" value="ECO:0007669"/>
    <property type="project" value="UniProtKB-UniRule"/>
</dbReference>
<dbReference type="GO" id="GO:0009252">
    <property type="term" value="P:peptidoglycan biosynthetic process"/>
    <property type="evidence" value="ECO:0007669"/>
    <property type="project" value="UniProtKB-UniRule"/>
</dbReference>
<dbReference type="GO" id="GO:0008360">
    <property type="term" value="P:regulation of cell shape"/>
    <property type="evidence" value="ECO:0007669"/>
    <property type="project" value="UniProtKB-KW"/>
</dbReference>
<dbReference type="CDD" id="cd03785">
    <property type="entry name" value="GT28_MurG"/>
    <property type="match status" value="1"/>
</dbReference>
<dbReference type="Gene3D" id="3.40.50.2000">
    <property type="entry name" value="Glycogen Phosphorylase B"/>
    <property type="match status" value="2"/>
</dbReference>
<dbReference type="HAMAP" id="MF_00033">
    <property type="entry name" value="MurG"/>
    <property type="match status" value="1"/>
</dbReference>
<dbReference type="InterPro" id="IPR006009">
    <property type="entry name" value="GlcNAc_MurG"/>
</dbReference>
<dbReference type="InterPro" id="IPR007235">
    <property type="entry name" value="Glyco_trans_28_C"/>
</dbReference>
<dbReference type="InterPro" id="IPR004276">
    <property type="entry name" value="GlycoTrans_28_N"/>
</dbReference>
<dbReference type="NCBIfam" id="TIGR01133">
    <property type="entry name" value="murG"/>
    <property type="match status" value="1"/>
</dbReference>
<dbReference type="PANTHER" id="PTHR21015:SF22">
    <property type="entry name" value="GLYCOSYLTRANSFERASE"/>
    <property type="match status" value="1"/>
</dbReference>
<dbReference type="PANTHER" id="PTHR21015">
    <property type="entry name" value="UDP-N-ACETYLGLUCOSAMINE--N-ACETYLMURAMYL-(PENTAPEPTIDE) PYROPHOSPHORYL-UNDECAPRENOL N-ACETYLGLUCOSAMINE TRANSFERASE 1"/>
    <property type="match status" value="1"/>
</dbReference>
<dbReference type="Pfam" id="PF04101">
    <property type="entry name" value="Glyco_tran_28_C"/>
    <property type="match status" value="1"/>
</dbReference>
<dbReference type="Pfam" id="PF03033">
    <property type="entry name" value="Glyco_transf_28"/>
    <property type="match status" value="1"/>
</dbReference>
<dbReference type="SUPFAM" id="SSF53756">
    <property type="entry name" value="UDP-Glycosyltransferase/glycogen phosphorylase"/>
    <property type="match status" value="1"/>
</dbReference>
<reference key="1">
    <citation type="journal article" date="2008" name="J. Bacteriol.">
        <title>Insights into plant cell wall degradation from the genome sequence of the soil bacterium Cellvibrio japonicus.</title>
        <authorList>
            <person name="DeBoy R.T."/>
            <person name="Mongodin E.F."/>
            <person name="Fouts D.E."/>
            <person name="Tailford L.E."/>
            <person name="Khouri H."/>
            <person name="Emerson J.B."/>
            <person name="Mohamoud Y."/>
            <person name="Watkins K."/>
            <person name="Henrissat B."/>
            <person name="Gilbert H.J."/>
            <person name="Nelson K.E."/>
        </authorList>
    </citation>
    <scope>NUCLEOTIDE SEQUENCE [LARGE SCALE GENOMIC DNA]</scope>
    <source>
        <strain>Ueda107</strain>
    </source>
</reference>
<comment type="function">
    <text evidence="1">Cell wall formation. Catalyzes the transfer of a GlcNAc subunit on undecaprenyl-pyrophosphoryl-MurNAc-pentapeptide (lipid intermediate I) to form undecaprenyl-pyrophosphoryl-MurNAc-(pentapeptide)GlcNAc (lipid intermediate II).</text>
</comment>
<comment type="catalytic activity">
    <reaction evidence="1">
        <text>di-trans,octa-cis-undecaprenyl diphospho-N-acetyl-alpha-D-muramoyl-L-alanyl-D-glutamyl-meso-2,6-diaminopimeloyl-D-alanyl-D-alanine + UDP-N-acetyl-alpha-D-glucosamine = di-trans,octa-cis-undecaprenyl diphospho-[N-acetyl-alpha-D-glucosaminyl-(1-&gt;4)]-N-acetyl-alpha-D-muramoyl-L-alanyl-D-glutamyl-meso-2,6-diaminopimeloyl-D-alanyl-D-alanine + UDP + H(+)</text>
        <dbReference type="Rhea" id="RHEA:31227"/>
        <dbReference type="ChEBI" id="CHEBI:15378"/>
        <dbReference type="ChEBI" id="CHEBI:57705"/>
        <dbReference type="ChEBI" id="CHEBI:58223"/>
        <dbReference type="ChEBI" id="CHEBI:61387"/>
        <dbReference type="ChEBI" id="CHEBI:61388"/>
        <dbReference type="EC" id="2.4.1.227"/>
    </reaction>
</comment>
<comment type="pathway">
    <text evidence="1">Cell wall biogenesis; peptidoglycan biosynthesis.</text>
</comment>
<comment type="subcellular location">
    <subcellularLocation>
        <location evidence="1">Cell inner membrane</location>
        <topology evidence="1">Peripheral membrane protein</topology>
        <orientation evidence="1">Cytoplasmic side</orientation>
    </subcellularLocation>
</comment>
<comment type="similarity">
    <text evidence="1">Belongs to the glycosyltransferase 28 family. MurG subfamily.</text>
</comment>
<keyword id="KW-0131">Cell cycle</keyword>
<keyword id="KW-0132">Cell division</keyword>
<keyword id="KW-0997">Cell inner membrane</keyword>
<keyword id="KW-1003">Cell membrane</keyword>
<keyword id="KW-0133">Cell shape</keyword>
<keyword id="KW-0961">Cell wall biogenesis/degradation</keyword>
<keyword id="KW-0328">Glycosyltransferase</keyword>
<keyword id="KW-0472">Membrane</keyword>
<keyword id="KW-0573">Peptidoglycan synthesis</keyword>
<keyword id="KW-1185">Reference proteome</keyword>
<keyword id="KW-0808">Transferase</keyword>